<sequence length="130" mass="13915">MAKPAEKKTKKKIKRVITDGVAHVHASFNNTIVTITDRQGNALSWATSGGAGFRGSRKSTPFAAQVAAEKAGRAALDYGVKSLEVRIKGPGPGRESAVRSLNNVGYKITNIIDVTPIPHNGCRPPKKRRV</sequence>
<accession>Q4URG1</accession>
<gene>
    <name evidence="1" type="primary">rpsK</name>
    <name type="ordered locus">XC_3318</name>
</gene>
<organism>
    <name type="scientific">Xanthomonas campestris pv. campestris (strain 8004)</name>
    <dbReference type="NCBI Taxonomy" id="314565"/>
    <lineage>
        <taxon>Bacteria</taxon>
        <taxon>Pseudomonadati</taxon>
        <taxon>Pseudomonadota</taxon>
        <taxon>Gammaproteobacteria</taxon>
        <taxon>Lysobacterales</taxon>
        <taxon>Lysobacteraceae</taxon>
        <taxon>Xanthomonas</taxon>
    </lineage>
</organism>
<dbReference type="EMBL" id="CP000050">
    <property type="protein sequence ID" value="AAY50362.1"/>
    <property type="molecule type" value="Genomic_DNA"/>
</dbReference>
<dbReference type="RefSeq" id="WP_003486671.1">
    <property type="nucleotide sequence ID" value="NZ_CP155948.1"/>
</dbReference>
<dbReference type="SMR" id="Q4URG1"/>
<dbReference type="GeneID" id="97509358"/>
<dbReference type="KEGG" id="xcb:XC_3318"/>
<dbReference type="HOGENOM" id="CLU_072439_5_0_6"/>
<dbReference type="Proteomes" id="UP000000420">
    <property type="component" value="Chromosome"/>
</dbReference>
<dbReference type="GO" id="GO:1990904">
    <property type="term" value="C:ribonucleoprotein complex"/>
    <property type="evidence" value="ECO:0007669"/>
    <property type="project" value="UniProtKB-KW"/>
</dbReference>
<dbReference type="GO" id="GO:0005840">
    <property type="term" value="C:ribosome"/>
    <property type="evidence" value="ECO:0007669"/>
    <property type="project" value="UniProtKB-KW"/>
</dbReference>
<dbReference type="GO" id="GO:0019843">
    <property type="term" value="F:rRNA binding"/>
    <property type="evidence" value="ECO:0007669"/>
    <property type="project" value="UniProtKB-UniRule"/>
</dbReference>
<dbReference type="GO" id="GO:0003735">
    <property type="term" value="F:structural constituent of ribosome"/>
    <property type="evidence" value="ECO:0007669"/>
    <property type="project" value="InterPro"/>
</dbReference>
<dbReference type="GO" id="GO:0006412">
    <property type="term" value="P:translation"/>
    <property type="evidence" value="ECO:0007669"/>
    <property type="project" value="UniProtKB-UniRule"/>
</dbReference>
<dbReference type="FunFam" id="3.30.420.80:FF:000001">
    <property type="entry name" value="30S ribosomal protein S11"/>
    <property type="match status" value="1"/>
</dbReference>
<dbReference type="Gene3D" id="3.30.420.80">
    <property type="entry name" value="Ribosomal protein S11"/>
    <property type="match status" value="1"/>
</dbReference>
<dbReference type="HAMAP" id="MF_01310">
    <property type="entry name" value="Ribosomal_uS11"/>
    <property type="match status" value="1"/>
</dbReference>
<dbReference type="InterPro" id="IPR001971">
    <property type="entry name" value="Ribosomal_uS11"/>
</dbReference>
<dbReference type="InterPro" id="IPR019981">
    <property type="entry name" value="Ribosomal_uS11_bac-type"/>
</dbReference>
<dbReference type="InterPro" id="IPR018102">
    <property type="entry name" value="Ribosomal_uS11_CS"/>
</dbReference>
<dbReference type="InterPro" id="IPR036967">
    <property type="entry name" value="Ribosomal_uS11_sf"/>
</dbReference>
<dbReference type="NCBIfam" id="NF003698">
    <property type="entry name" value="PRK05309.1"/>
    <property type="match status" value="1"/>
</dbReference>
<dbReference type="NCBIfam" id="TIGR03632">
    <property type="entry name" value="uS11_bact"/>
    <property type="match status" value="1"/>
</dbReference>
<dbReference type="PANTHER" id="PTHR11759">
    <property type="entry name" value="40S RIBOSOMAL PROTEIN S14/30S RIBOSOMAL PROTEIN S11"/>
    <property type="match status" value="1"/>
</dbReference>
<dbReference type="Pfam" id="PF00411">
    <property type="entry name" value="Ribosomal_S11"/>
    <property type="match status" value="1"/>
</dbReference>
<dbReference type="PIRSF" id="PIRSF002131">
    <property type="entry name" value="Ribosomal_S11"/>
    <property type="match status" value="1"/>
</dbReference>
<dbReference type="SUPFAM" id="SSF53137">
    <property type="entry name" value="Translational machinery components"/>
    <property type="match status" value="1"/>
</dbReference>
<dbReference type="PROSITE" id="PS00054">
    <property type="entry name" value="RIBOSOMAL_S11"/>
    <property type="match status" value="1"/>
</dbReference>
<name>RS11_XANC8</name>
<evidence type="ECO:0000255" key="1">
    <source>
        <dbReference type="HAMAP-Rule" id="MF_01310"/>
    </source>
</evidence>
<evidence type="ECO:0000305" key="2"/>
<proteinExistence type="inferred from homology"/>
<reference key="1">
    <citation type="journal article" date="2005" name="Genome Res.">
        <title>Comparative and functional genomic analyses of the pathogenicity of phytopathogen Xanthomonas campestris pv. campestris.</title>
        <authorList>
            <person name="Qian W."/>
            <person name="Jia Y."/>
            <person name="Ren S.-X."/>
            <person name="He Y.-Q."/>
            <person name="Feng J.-X."/>
            <person name="Lu L.-F."/>
            <person name="Sun Q."/>
            <person name="Ying G."/>
            <person name="Tang D.-J."/>
            <person name="Tang H."/>
            <person name="Wu W."/>
            <person name="Hao P."/>
            <person name="Wang L."/>
            <person name="Jiang B.-L."/>
            <person name="Zeng S."/>
            <person name="Gu W.-Y."/>
            <person name="Lu G."/>
            <person name="Rong L."/>
            <person name="Tian Y."/>
            <person name="Yao Z."/>
            <person name="Fu G."/>
            <person name="Chen B."/>
            <person name="Fang R."/>
            <person name="Qiang B."/>
            <person name="Chen Z."/>
            <person name="Zhao G.-P."/>
            <person name="Tang J.-L."/>
            <person name="He C."/>
        </authorList>
    </citation>
    <scope>NUCLEOTIDE SEQUENCE [LARGE SCALE GENOMIC DNA]</scope>
    <source>
        <strain>8004</strain>
    </source>
</reference>
<comment type="function">
    <text evidence="1">Located on the platform of the 30S subunit, it bridges several disparate RNA helices of the 16S rRNA. Forms part of the Shine-Dalgarno cleft in the 70S ribosome.</text>
</comment>
<comment type="subunit">
    <text evidence="1">Part of the 30S ribosomal subunit. Interacts with proteins S7 and S18. Binds to IF-3.</text>
</comment>
<comment type="similarity">
    <text evidence="1">Belongs to the universal ribosomal protein uS11 family.</text>
</comment>
<keyword id="KW-0687">Ribonucleoprotein</keyword>
<keyword id="KW-0689">Ribosomal protein</keyword>
<keyword id="KW-0694">RNA-binding</keyword>
<keyword id="KW-0699">rRNA-binding</keyword>
<feature type="chain" id="PRO_0000230442" description="Small ribosomal subunit protein uS11">
    <location>
        <begin position="1"/>
        <end position="130"/>
    </location>
</feature>
<protein>
    <recommendedName>
        <fullName evidence="1">Small ribosomal subunit protein uS11</fullName>
    </recommendedName>
    <alternativeName>
        <fullName evidence="2">30S ribosomal protein S11</fullName>
    </alternativeName>
</protein>